<keyword id="KW-0175">Coiled coil</keyword>
<keyword id="KW-0256">Endoplasmic reticulum</keyword>
<keyword id="KW-0325">Glycoprotein</keyword>
<keyword id="KW-0472">Membrane</keyword>
<keyword id="KW-1185">Reference proteome</keyword>
<keyword id="KW-0732">Signal</keyword>
<keyword id="KW-0812">Transmembrane</keyword>
<keyword id="KW-1133">Transmembrane helix</keyword>
<sequence length="483" mass="55802">MKAFHTFCVVLLVFGSVSEAKFDDFEDEEDIVEYDDNDFAEFEDVMEDSVTESPQRVITTEDDEDETTVELEGQDENQEGDFEDADTQEGDTESEPYDDEEFEGYEDKPDTSSSKNKDPITIVDVPAHLQNSWESYYLEILMVTGLLAYIMNYIIGKNKNSRLAQAWFNTHRELLESNFTLVGDDGTNKEATSTGKLNQENEHIYNLWCSGRVCCEGMLIQLRFLKRQDLLNVLARMMRPVSDQVQIKVTMNDEDMDTYVFAVGTRKALVRLQKEMQDLSEFCSDKPKSGAKYGLPDSLAILSEMGEVTDGMMDTKMVHFLTHYADKIESVHFSDQSSGPKIMQEEGQPLKLPDTKRTLLFTFNVPGSGNTYPKDMEALLPLMNMVIYSIDKAKKFRLNREGKQKADKNRARVEENFLKLTHVQRQEAAQSRREEKKRAEKERIMNEEDPEKQRRLEEAALRREQKKLEKKQMKMKQIKVKAM</sequence>
<feature type="signal peptide" evidence="4">
    <location>
        <begin position="1"/>
        <end position="20"/>
    </location>
</feature>
<feature type="chain" id="PRO_0000235798" description="PAT complex subunit CCDC47">
    <location>
        <begin position="21"/>
        <end position="483"/>
    </location>
</feature>
<feature type="topological domain" description="Cytoplasmic" evidence="1">
    <location>
        <begin position="21"/>
        <end position="135"/>
    </location>
</feature>
<feature type="transmembrane region" description="Helical" evidence="4">
    <location>
        <begin position="136"/>
        <end position="155"/>
    </location>
</feature>
<feature type="topological domain" description="Lumenal" evidence="1">
    <location>
        <begin position="156"/>
        <end position="483"/>
    </location>
</feature>
<feature type="region of interest" description="Disordered" evidence="5">
    <location>
        <begin position="46"/>
        <end position="119"/>
    </location>
</feature>
<feature type="region of interest" description="Disordered" evidence="5">
    <location>
        <begin position="424"/>
        <end position="483"/>
    </location>
</feature>
<feature type="coiled-coil region" evidence="4">
    <location>
        <begin position="450"/>
        <end position="483"/>
    </location>
</feature>
<feature type="compositionally biased region" description="Acidic residues" evidence="5">
    <location>
        <begin position="60"/>
        <end position="104"/>
    </location>
</feature>
<feature type="compositionally biased region" description="Basic and acidic residues" evidence="5">
    <location>
        <begin position="105"/>
        <end position="118"/>
    </location>
</feature>
<feature type="compositionally biased region" description="Basic and acidic residues" evidence="5">
    <location>
        <begin position="430"/>
        <end position="472"/>
    </location>
</feature>
<feature type="compositionally biased region" description="Basic residues" evidence="5">
    <location>
        <begin position="473"/>
        <end position="483"/>
    </location>
</feature>
<feature type="glycosylation site" description="N-linked (GlcNAc...) asparagine" evidence="4">
    <location>
        <position position="178"/>
    </location>
</feature>
<reference key="1">
    <citation type="submission" date="2006-03" db="EMBL/GenBank/DDBJ databases">
        <title>DNA sequences of macaque genes expressed in brain or testis and its evolutionary implications.</title>
        <authorList>
            <consortium name="International consortium for macaque cDNA sequencing and analysis"/>
        </authorList>
    </citation>
    <scope>NUCLEOTIDE SEQUENCE [LARGE SCALE MRNA]</scope>
    <source>
        <tissue>Temporal cortex</tissue>
    </source>
</reference>
<organism>
    <name type="scientific">Macaca fascicularis</name>
    <name type="common">Crab-eating macaque</name>
    <name type="synonym">Cynomolgus monkey</name>
    <dbReference type="NCBI Taxonomy" id="9541"/>
    <lineage>
        <taxon>Eukaryota</taxon>
        <taxon>Metazoa</taxon>
        <taxon>Chordata</taxon>
        <taxon>Craniata</taxon>
        <taxon>Vertebrata</taxon>
        <taxon>Euteleostomi</taxon>
        <taxon>Mammalia</taxon>
        <taxon>Eutheria</taxon>
        <taxon>Euarchontoglires</taxon>
        <taxon>Primates</taxon>
        <taxon>Haplorrhini</taxon>
        <taxon>Catarrhini</taxon>
        <taxon>Cercopithecidae</taxon>
        <taxon>Cercopithecinae</taxon>
        <taxon>Macaca</taxon>
    </lineage>
</organism>
<proteinExistence type="evidence at transcript level"/>
<dbReference type="EMBL" id="AB174266">
    <property type="protein sequence ID" value="BAE91328.1"/>
    <property type="molecule type" value="mRNA"/>
</dbReference>
<dbReference type="SMR" id="P0C204"/>
<dbReference type="STRING" id="9541.ENSMFAP00000035486"/>
<dbReference type="GlyCosmos" id="P0C204">
    <property type="glycosylation" value="1 site, No reported glycans"/>
</dbReference>
<dbReference type="eggNOG" id="KOG2357">
    <property type="taxonomic scope" value="Eukaryota"/>
</dbReference>
<dbReference type="Proteomes" id="UP000233100">
    <property type="component" value="Unplaced"/>
</dbReference>
<dbReference type="GO" id="GO:0005789">
    <property type="term" value="C:endoplasmic reticulum membrane"/>
    <property type="evidence" value="ECO:0000250"/>
    <property type="project" value="UniProtKB"/>
</dbReference>
<dbReference type="GO" id="GO:0160064">
    <property type="term" value="C:multi-pass translocon complex"/>
    <property type="evidence" value="ECO:0000250"/>
    <property type="project" value="UniProtKB"/>
</dbReference>
<dbReference type="GO" id="GO:0030867">
    <property type="term" value="C:rough endoplasmic reticulum membrane"/>
    <property type="evidence" value="ECO:0007669"/>
    <property type="project" value="UniProtKB-SubCell"/>
</dbReference>
<dbReference type="GO" id="GO:0005509">
    <property type="term" value="F:calcium ion binding"/>
    <property type="evidence" value="ECO:0007669"/>
    <property type="project" value="InterPro"/>
</dbReference>
<dbReference type="GO" id="GO:0044183">
    <property type="term" value="F:protein folding chaperone"/>
    <property type="evidence" value="ECO:0000250"/>
    <property type="project" value="UniProtKB"/>
</dbReference>
<dbReference type="GO" id="GO:0043022">
    <property type="term" value="F:ribosome binding"/>
    <property type="evidence" value="ECO:0000250"/>
    <property type="project" value="UniProtKB"/>
</dbReference>
<dbReference type="GO" id="GO:0032469">
    <property type="term" value="P:endoplasmic reticulum calcium ion homeostasis"/>
    <property type="evidence" value="ECO:0000250"/>
    <property type="project" value="UniProtKB"/>
</dbReference>
<dbReference type="GO" id="GO:0036503">
    <property type="term" value="P:ERAD pathway"/>
    <property type="evidence" value="ECO:0000250"/>
    <property type="project" value="UniProtKB"/>
</dbReference>
<dbReference type="GO" id="GO:0160063">
    <property type="term" value="P:multi-pass transmembrane protein insertion into ER membrane"/>
    <property type="evidence" value="ECO:0000250"/>
    <property type="project" value="UniProtKB"/>
</dbReference>
<dbReference type="GO" id="GO:0045048">
    <property type="term" value="P:protein insertion into ER membrane"/>
    <property type="evidence" value="ECO:0000250"/>
    <property type="project" value="UniProtKB"/>
</dbReference>
<dbReference type="InterPro" id="IPR012879">
    <property type="entry name" value="CCDC47"/>
</dbReference>
<dbReference type="PANTHER" id="PTHR12883">
    <property type="entry name" value="ADIPOCYTE-SPECIFIC PROTEIN 4-RELATED"/>
    <property type="match status" value="1"/>
</dbReference>
<dbReference type="PANTHER" id="PTHR12883:SF0">
    <property type="entry name" value="PAT COMPLEX SUBUNIT CCDC47"/>
    <property type="match status" value="1"/>
</dbReference>
<dbReference type="Pfam" id="PF07946">
    <property type="entry name" value="CCDC47"/>
    <property type="match status" value="1"/>
</dbReference>
<evidence type="ECO:0000250" key="1">
    <source>
        <dbReference type="UniProtKB" id="A0A8I3P7X4"/>
    </source>
</evidence>
<evidence type="ECO:0000250" key="2">
    <source>
        <dbReference type="UniProtKB" id="Q96A33"/>
    </source>
</evidence>
<evidence type="ECO:0000250" key="3">
    <source>
        <dbReference type="UniProtKB" id="Q9D024"/>
    </source>
</evidence>
<evidence type="ECO:0000255" key="4"/>
<evidence type="ECO:0000256" key="5">
    <source>
        <dbReference type="SAM" id="MobiDB-lite"/>
    </source>
</evidence>
<evidence type="ECO:0000305" key="6"/>
<name>CCD47_MACFA</name>
<gene>
    <name type="primary">CCDC47</name>
    <name type="ORF">QtrA-15751</name>
</gene>
<accession>P0C204</accession>
<protein>
    <recommendedName>
        <fullName evidence="6">PAT complex subunit CCDC47</fullName>
    </recommendedName>
    <alternativeName>
        <fullName>Coiled-coil domain-containing protein 47</fullName>
    </alternativeName>
</protein>
<comment type="function">
    <text evidence="1 2 3">Component of the multi-pass translocon (MPT) complex that mediates insertion of multi-pass membrane proteins into the lipid bilayer of membranes. The MPT complex takes over after the SEC61 complex: following membrane insertion of the first few transmembrane segments of proteins by the SEC61 complex, the MPT complex occludes the lateral gate of the SEC61 complex to promote insertion of subsequent transmembrane regions (By similarity). Within the MPT complex, the PAT subcomplex sequesters any highly polar regions in the transmembrane domains away from the non-polar membrane environment until they can be buried in the interior of the fully assembled protein. Within the PAT subcomplex, CCDC47 occludes the lateral gate of the SEC61 complex (By similarity). Involved in the regulation of calcium ion homeostasis in the ER. Required for proper protein degradation via the ERAD (ER-associated degradation) pathway (By similarity). Has an essential role in the maintenance of ER organization during embryogenesis (By similarity).</text>
</comment>
<comment type="subunit">
    <text evidence="2 3">Component of the PAT complex, composed of WDR83OS/Asterix and CCDC47. The PAT complex is part of the multi-pass translocon (MPT) complex, composed of three subcomplexes, the GEL complex (composed of RAB5IF/OPTI and TMCO1), the BOS complex (composed of NCLN/Nicalin, NOMO1 and TMEM147) and the PAT complex (composed of WDR83OS/Asterix and CCDC47). The MPT complex associates with the SEC61 complex (By similarity). Interacts with VCP, HSPA5, DERL1, DERL2 and SELENOS (By similarity).</text>
</comment>
<comment type="subcellular location">
    <subcellularLocation>
        <location evidence="2">Endoplasmic reticulum membrane</location>
        <topology evidence="4">Single-pass type I membrane protein</topology>
    </subcellularLocation>
    <subcellularLocation>
        <location evidence="3">Rough endoplasmic reticulum membrane</location>
        <topology evidence="4">Single-pass type I membrane protein</topology>
    </subcellularLocation>
</comment>
<comment type="similarity">
    <text evidence="6">Belongs to the CCDC47 family.</text>
</comment>